<protein>
    <recommendedName>
        <fullName evidence="1">Cell division inhibitor SulA</fullName>
    </recommendedName>
</protein>
<dbReference type="EMBL" id="AE017220">
    <property type="protein sequence ID" value="AAX64929.1"/>
    <property type="molecule type" value="Genomic_DNA"/>
</dbReference>
<dbReference type="RefSeq" id="WP_000288731.1">
    <property type="nucleotide sequence ID" value="NC_006905.1"/>
</dbReference>
<dbReference type="SMR" id="Q57QT2"/>
<dbReference type="KEGG" id="sec:SCH_1023"/>
<dbReference type="HOGENOM" id="CLU_118972_1_0_6"/>
<dbReference type="Proteomes" id="UP000000538">
    <property type="component" value="Chromosome"/>
</dbReference>
<dbReference type="GO" id="GO:0000917">
    <property type="term" value="P:division septum assembly"/>
    <property type="evidence" value="ECO:0007669"/>
    <property type="project" value="UniProtKB-KW"/>
</dbReference>
<dbReference type="GO" id="GO:0006281">
    <property type="term" value="P:DNA repair"/>
    <property type="evidence" value="ECO:0007669"/>
    <property type="project" value="TreeGrafter"/>
</dbReference>
<dbReference type="GO" id="GO:0051782">
    <property type="term" value="P:negative regulation of cell division"/>
    <property type="evidence" value="ECO:0007669"/>
    <property type="project" value="UniProtKB-UniRule"/>
</dbReference>
<dbReference type="GO" id="GO:0009432">
    <property type="term" value="P:SOS response"/>
    <property type="evidence" value="ECO:0007669"/>
    <property type="project" value="UniProtKB-UniRule"/>
</dbReference>
<dbReference type="FunFam" id="3.40.50.300:FF:000417">
    <property type="entry name" value="Cell division inhibitor SulA"/>
    <property type="match status" value="1"/>
</dbReference>
<dbReference type="Gene3D" id="3.40.50.300">
    <property type="entry name" value="P-loop containing nucleotide triphosphate hydrolases"/>
    <property type="match status" value="1"/>
</dbReference>
<dbReference type="HAMAP" id="MF_01179">
    <property type="entry name" value="SulA"/>
    <property type="match status" value="1"/>
</dbReference>
<dbReference type="InterPro" id="IPR004596">
    <property type="entry name" value="Cell_div_suppressor_SulA"/>
</dbReference>
<dbReference type="InterPro" id="IPR027417">
    <property type="entry name" value="P-loop_NTPase"/>
</dbReference>
<dbReference type="InterPro" id="IPR050356">
    <property type="entry name" value="SulA_CellDiv_inhibitor"/>
</dbReference>
<dbReference type="InterPro" id="IPR047696">
    <property type="entry name" value="SulA_enterobact"/>
</dbReference>
<dbReference type="NCBIfam" id="NF007892">
    <property type="entry name" value="PRK10595.1"/>
    <property type="match status" value="1"/>
</dbReference>
<dbReference type="NCBIfam" id="TIGR00623">
    <property type="entry name" value="SOS_SulA_coli"/>
    <property type="match status" value="1"/>
</dbReference>
<dbReference type="PANTHER" id="PTHR35369">
    <property type="entry name" value="BLR3025 PROTEIN-RELATED"/>
    <property type="match status" value="1"/>
</dbReference>
<dbReference type="PANTHER" id="PTHR35369:SF4">
    <property type="entry name" value="CELL DIVISION INHIBITOR SULA"/>
    <property type="match status" value="1"/>
</dbReference>
<dbReference type="Pfam" id="PF03846">
    <property type="entry name" value="SulA"/>
    <property type="match status" value="1"/>
</dbReference>
<dbReference type="PIRSF" id="PIRSF003093">
    <property type="entry name" value="SulA"/>
    <property type="match status" value="1"/>
</dbReference>
<dbReference type="SUPFAM" id="SSF52540">
    <property type="entry name" value="P-loop containing nucleoside triphosphate hydrolases"/>
    <property type="match status" value="1"/>
</dbReference>
<keyword id="KW-0131">Cell cycle</keyword>
<keyword id="KW-0132">Cell division</keyword>
<keyword id="KW-0227">DNA damage</keyword>
<keyword id="KW-0717">Septation</keyword>
<keyword id="KW-0742">SOS response</keyword>
<proteinExistence type="inferred from homology"/>
<evidence type="ECO:0000255" key="1">
    <source>
        <dbReference type="HAMAP-Rule" id="MF_01179"/>
    </source>
</evidence>
<reference key="1">
    <citation type="journal article" date="2005" name="Nucleic Acids Res.">
        <title>The genome sequence of Salmonella enterica serovar Choleraesuis, a highly invasive and resistant zoonotic pathogen.</title>
        <authorList>
            <person name="Chiu C.-H."/>
            <person name="Tang P."/>
            <person name="Chu C."/>
            <person name="Hu S."/>
            <person name="Bao Q."/>
            <person name="Yu J."/>
            <person name="Chou Y.-Y."/>
            <person name="Wang H.-S."/>
            <person name="Lee Y.-S."/>
        </authorList>
    </citation>
    <scope>NUCLEOTIDE SEQUENCE [LARGE SCALE GENOMIC DNA]</scope>
    <source>
        <strain>SC-B67</strain>
    </source>
</reference>
<name>SULA_SALCH</name>
<organism>
    <name type="scientific">Salmonella choleraesuis (strain SC-B67)</name>
    <dbReference type="NCBI Taxonomy" id="321314"/>
    <lineage>
        <taxon>Bacteria</taxon>
        <taxon>Pseudomonadati</taxon>
        <taxon>Pseudomonadota</taxon>
        <taxon>Gammaproteobacteria</taxon>
        <taxon>Enterobacterales</taxon>
        <taxon>Enterobacteriaceae</taxon>
        <taxon>Salmonella</taxon>
    </lineage>
</organism>
<gene>
    <name evidence="1" type="primary">sulA</name>
    <name type="ordered locus">SCH_1023</name>
</gene>
<feature type="chain" id="PRO_0000343971" description="Cell division inhibitor SulA">
    <location>
        <begin position="1"/>
        <end position="169"/>
    </location>
</feature>
<feature type="region of interest" description="FtsZ binding" evidence="1">
    <location>
        <begin position="106"/>
        <end position="112"/>
    </location>
</feature>
<feature type="region of interest" description="Lon protease binding" evidence="1">
    <location>
        <begin position="162"/>
        <end position="169"/>
    </location>
</feature>
<feature type="site" description="Essential for degradation by Lon protease" evidence="1">
    <location>
        <position position="169"/>
    </location>
</feature>
<accession>Q57QT2</accession>
<comment type="function">
    <text evidence="1">Component of the SOS system and an inhibitor of cell division. Accumulation of SulA causes rapid cessation of cell division and the appearance of long, non-septate filaments. In the presence of GTP, binds a polymerization-competent form of FtsZ in a 1:1 ratio, thus inhibiting FtsZ polymerization and therefore preventing it from participating in the assembly of the Z ring. This mechanism prevents the premature segregation of damaged DNA to daughter cells during cell division.</text>
</comment>
<comment type="subunit">
    <text evidence="1">Interacts with FtsZ.</text>
</comment>
<comment type="induction">
    <text evidence="1">By DNA damage, as part of the SOS response.</text>
</comment>
<comment type="PTM">
    <text evidence="1">Is rapidly cleaved and degraded by the Lon protease once DNA damage is repaired.</text>
</comment>
<comment type="similarity">
    <text evidence="1">Belongs to the SulA family.</text>
</comment>
<sequence length="169" mass="18994">MYTSGYANRSSSFPTTTHNAARTATENAAAGLVSEVVYHEDQPMMAQLLLLPLLRQLGQQSRWQLWLTPQQKLSREWVQSSGLPLTKVMQISQLAPRHTLESMIRALRTGNYSVVIGWMTEELTEEEHASLVEAAKVGNAVGFIMHPVRAHALPRRQHSGLKIHSNLYH</sequence>